<comment type="function">
    <text evidence="1">Catalyzes the conversion of dihydroorotate to orotate with quinone as electron acceptor.</text>
</comment>
<comment type="catalytic activity">
    <reaction evidence="1">
        <text>(S)-dihydroorotate + a quinone = orotate + a quinol</text>
        <dbReference type="Rhea" id="RHEA:30187"/>
        <dbReference type="ChEBI" id="CHEBI:24646"/>
        <dbReference type="ChEBI" id="CHEBI:30839"/>
        <dbReference type="ChEBI" id="CHEBI:30864"/>
        <dbReference type="ChEBI" id="CHEBI:132124"/>
        <dbReference type="EC" id="1.3.5.2"/>
    </reaction>
</comment>
<comment type="cofactor">
    <cofactor evidence="1">
        <name>FMN</name>
        <dbReference type="ChEBI" id="CHEBI:58210"/>
    </cofactor>
    <text evidence="1">Binds 1 FMN per subunit.</text>
</comment>
<comment type="pathway">
    <text evidence="1">Pyrimidine metabolism; UMP biosynthesis via de novo pathway; orotate from (S)-dihydroorotate (quinone route): step 1/1.</text>
</comment>
<comment type="subunit">
    <text evidence="1">Monomer.</text>
</comment>
<comment type="subcellular location">
    <subcellularLocation>
        <location evidence="1">Cell membrane</location>
        <topology evidence="1">Peripheral membrane protein</topology>
    </subcellularLocation>
</comment>
<comment type="similarity">
    <text evidence="1">Belongs to the dihydroorotate dehydrogenase family. Type 2 subfamily.</text>
</comment>
<name>PYRD_BURM7</name>
<accession>A3MJ98</accession>
<feature type="chain" id="PRO_1000024158" description="Dihydroorotate dehydrogenase (quinone)">
    <location>
        <begin position="1"/>
        <end position="345"/>
    </location>
</feature>
<feature type="active site" description="Nucleophile" evidence="1">
    <location>
        <position position="178"/>
    </location>
</feature>
<feature type="binding site" evidence="1">
    <location>
        <begin position="65"/>
        <end position="69"/>
    </location>
    <ligand>
        <name>FMN</name>
        <dbReference type="ChEBI" id="CHEBI:58210"/>
    </ligand>
</feature>
<feature type="binding site" evidence="1">
    <location>
        <position position="69"/>
    </location>
    <ligand>
        <name>substrate</name>
    </ligand>
</feature>
<feature type="binding site" evidence="1">
    <location>
        <position position="89"/>
    </location>
    <ligand>
        <name>FMN</name>
        <dbReference type="ChEBI" id="CHEBI:58210"/>
    </ligand>
</feature>
<feature type="binding site" evidence="1">
    <location>
        <begin position="114"/>
        <end position="118"/>
    </location>
    <ligand>
        <name>substrate</name>
    </ligand>
</feature>
<feature type="binding site" evidence="1">
    <location>
        <position position="142"/>
    </location>
    <ligand>
        <name>FMN</name>
        <dbReference type="ChEBI" id="CHEBI:58210"/>
    </ligand>
</feature>
<feature type="binding site" evidence="1">
    <location>
        <position position="175"/>
    </location>
    <ligand>
        <name>FMN</name>
        <dbReference type="ChEBI" id="CHEBI:58210"/>
    </ligand>
</feature>
<feature type="binding site" evidence="1">
    <location>
        <position position="175"/>
    </location>
    <ligand>
        <name>substrate</name>
    </ligand>
</feature>
<feature type="binding site" evidence="1">
    <location>
        <position position="180"/>
    </location>
    <ligand>
        <name>substrate</name>
    </ligand>
</feature>
<feature type="binding site" evidence="1">
    <location>
        <position position="220"/>
    </location>
    <ligand>
        <name>FMN</name>
        <dbReference type="ChEBI" id="CHEBI:58210"/>
    </ligand>
</feature>
<feature type="binding site" evidence="1">
    <location>
        <position position="248"/>
    </location>
    <ligand>
        <name>FMN</name>
        <dbReference type="ChEBI" id="CHEBI:58210"/>
    </ligand>
</feature>
<feature type="binding site" evidence="1">
    <location>
        <begin position="249"/>
        <end position="250"/>
    </location>
    <ligand>
        <name>substrate</name>
    </ligand>
</feature>
<feature type="binding site" evidence="1">
    <location>
        <position position="271"/>
    </location>
    <ligand>
        <name>FMN</name>
        <dbReference type="ChEBI" id="CHEBI:58210"/>
    </ligand>
</feature>
<feature type="binding site" evidence="1">
    <location>
        <position position="300"/>
    </location>
    <ligand>
        <name>FMN</name>
        <dbReference type="ChEBI" id="CHEBI:58210"/>
    </ligand>
</feature>
<feature type="binding site" evidence="1">
    <location>
        <begin position="321"/>
        <end position="322"/>
    </location>
    <ligand>
        <name>FMN</name>
        <dbReference type="ChEBI" id="CHEBI:58210"/>
    </ligand>
</feature>
<organism>
    <name type="scientific">Burkholderia mallei (strain NCTC 10247)</name>
    <dbReference type="NCBI Taxonomy" id="320389"/>
    <lineage>
        <taxon>Bacteria</taxon>
        <taxon>Pseudomonadati</taxon>
        <taxon>Pseudomonadota</taxon>
        <taxon>Betaproteobacteria</taxon>
        <taxon>Burkholderiales</taxon>
        <taxon>Burkholderiaceae</taxon>
        <taxon>Burkholderia</taxon>
        <taxon>pseudomallei group</taxon>
    </lineage>
</organism>
<dbReference type="EC" id="1.3.5.2" evidence="1"/>
<dbReference type="EMBL" id="CP000548">
    <property type="protein sequence ID" value="ABO04279.1"/>
    <property type="molecule type" value="Genomic_DNA"/>
</dbReference>
<dbReference type="RefSeq" id="WP_004193208.1">
    <property type="nucleotide sequence ID" value="NZ_CP007802.1"/>
</dbReference>
<dbReference type="SMR" id="A3MJ98"/>
<dbReference type="KEGG" id="bmaz:BM44_2296"/>
<dbReference type="KEGG" id="bmn:BMA10247_0768"/>
<dbReference type="PATRIC" id="fig|320389.8.peg.2577"/>
<dbReference type="UniPathway" id="UPA00070">
    <property type="reaction ID" value="UER00946"/>
</dbReference>
<dbReference type="GO" id="GO:0005737">
    <property type="term" value="C:cytoplasm"/>
    <property type="evidence" value="ECO:0007669"/>
    <property type="project" value="InterPro"/>
</dbReference>
<dbReference type="GO" id="GO:0005886">
    <property type="term" value="C:plasma membrane"/>
    <property type="evidence" value="ECO:0007669"/>
    <property type="project" value="UniProtKB-SubCell"/>
</dbReference>
<dbReference type="GO" id="GO:0106430">
    <property type="term" value="F:dihydroorotate dehydrogenase (quinone) activity"/>
    <property type="evidence" value="ECO:0007669"/>
    <property type="project" value="UniProtKB-EC"/>
</dbReference>
<dbReference type="GO" id="GO:0006207">
    <property type="term" value="P:'de novo' pyrimidine nucleobase biosynthetic process"/>
    <property type="evidence" value="ECO:0007669"/>
    <property type="project" value="InterPro"/>
</dbReference>
<dbReference type="GO" id="GO:0044205">
    <property type="term" value="P:'de novo' UMP biosynthetic process"/>
    <property type="evidence" value="ECO:0007669"/>
    <property type="project" value="UniProtKB-UniRule"/>
</dbReference>
<dbReference type="CDD" id="cd04738">
    <property type="entry name" value="DHOD_2_like"/>
    <property type="match status" value="1"/>
</dbReference>
<dbReference type="FunFam" id="3.20.20.70:FF:000028">
    <property type="entry name" value="Dihydroorotate dehydrogenase (quinone)"/>
    <property type="match status" value="1"/>
</dbReference>
<dbReference type="Gene3D" id="3.20.20.70">
    <property type="entry name" value="Aldolase class I"/>
    <property type="match status" value="1"/>
</dbReference>
<dbReference type="HAMAP" id="MF_00225">
    <property type="entry name" value="DHO_dh_type2"/>
    <property type="match status" value="1"/>
</dbReference>
<dbReference type="InterPro" id="IPR013785">
    <property type="entry name" value="Aldolase_TIM"/>
</dbReference>
<dbReference type="InterPro" id="IPR050074">
    <property type="entry name" value="DHO_dehydrogenase"/>
</dbReference>
<dbReference type="InterPro" id="IPR012135">
    <property type="entry name" value="Dihydroorotate_DH_1_2"/>
</dbReference>
<dbReference type="InterPro" id="IPR005719">
    <property type="entry name" value="Dihydroorotate_DH_2"/>
</dbReference>
<dbReference type="InterPro" id="IPR005720">
    <property type="entry name" value="Dihydroorotate_DH_cat"/>
</dbReference>
<dbReference type="InterPro" id="IPR001295">
    <property type="entry name" value="Dihydroorotate_DH_CS"/>
</dbReference>
<dbReference type="NCBIfam" id="NF003644">
    <property type="entry name" value="PRK05286.1-1"/>
    <property type="match status" value="1"/>
</dbReference>
<dbReference type="NCBIfam" id="NF003645">
    <property type="entry name" value="PRK05286.1-2"/>
    <property type="match status" value="1"/>
</dbReference>
<dbReference type="NCBIfam" id="NF003646">
    <property type="entry name" value="PRK05286.1-4"/>
    <property type="match status" value="1"/>
</dbReference>
<dbReference type="NCBIfam" id="NF003652">
    <property type="entry name" value="PRK05286.2-5"/>
    <property type="match status" value="1"/>
</dbReference>
<dbReference type="NCBIfam" id="TIGR01036">
    <property type="entry name" value="pyrD_sub2"/>
    <property type="match status" value="1"/>
</dbReference>
<dbReference type="PANTHER" id="PTHR48109:SF4">
    <property type="entry name" value="DIHYDROOROTATE DEHYDROGENASE (QUINONE), MITOCHONDRIAL"/>
    <property type="match status" value="1"/>
</dbReference>
<dbReference type="PANTHER" id="PTHR48109">
    <property type="entry name" value="DIHYDROOROTATE DEHYDROGENASE (QUINONE), MITOCHONDRIAL-RELATED"/>
    <property type="match status" value="1"/>
</dbReference>
<dbReference type="Pfam" id="PF01180">
    <property type="entry name" value="DHO_dh"/>
    <property type="match status" value="1"/>
</dbReference>
<dbReference type="PIRSF" id="PIRSF000164">
    <property type="entry name" value="DHO_oxidase"/>
    <property type="match status" value="1"/>
</dbReference>
<dbReference type="SUPFAM" id="SSF51395">
    <property type="entry name" value="FMN-linked oxidoreductases"/>
    <property type="match status" value="1"/>
</dbReference>
<dbReference type="PROSITE" id="PS00911">
    <property type="entry name" value="DHODEHASE_1"/>
    <property type="match status" value="1"/>
</dbReference>
<dbReference type="PROSITE" id="PS00912">
    <property type="entry name" value="DHODEHASE_2"/>
    <property type="match status" value="1"/>
</dbReference>
<evidence type="ECO:0000255" key="1">
    <source>
        <dbReference type="HAMAP-Rule" id="MF_00225"/>
    </source>
</evidence>
<reference key="1">
    <citation type="journal article" date="2010" name="Genome Biol. Evol.">
        <title>Continuing evolution of Burkholderia mallei through genome reduction and large-scale rearrangements.</title>
        <authorList>
            <person name="Losada L."/>
            <person name="Ronning C.M."/>
            <person name="DeShazer D."/>
            <person name="Woods D."/>
            <person name="Fedorova N."/>
            <person name="Kim H.S."/>
            <person name="Shabalina S.A."/>
            <person name="Pearson T.R."/>
            <person name="Brinkac L."/>
            <person name="Tan P."/>
            <person name="Nandi T."/>
            <person name="Crabtree J."/>
            <person name="Badger J."/>
            <person name="Beckstrom-Sternberg S."/>
            <person name="Saqib M."/>
            <person name="Schutzer S.E."/>
            <person name="Keim P."/>
            <person name="Nierman W.C."/>
        </authorList>
    </citation>
    <scope>NUCLEOTIDE SEQUENCE [LARGE SCALE GENOMIC DNA]</scope>
    <source>
        <strain>NCTC 10247</strain>
    </source>
</reference>
<protein>
    <recommendedName>
        <fullName evidence="1">Dihydroorotate dehydrogenase (quinone)</fullName>
        <ecNumber evidence="1">1.3.5.2</ecNumber>
    </recommendedName>
    <alternativeName>
        <fullName evidence="1">DHOdehase</fullName>
        <shortName evidence="1">DHOD</shortName>
        <shortName evidence="1">DHODase</shortName>
    </alternativeName>
    <alternativeName>
        <fullName evidence="1">Dihydroorotate oxidase</fullName>
    </alternativeName>
</protein>
<keyword id="KW-1003">Cell membrane</keyword>
<keyword id="KW-0285">Flavoprotein</keyword>
<keyword id="KW-0288">FMN</keyword>
<keyword id="KW-0472">Membrane</keyword>
<keyword id="KW-0560">Oxidoreductase</keyword>
<keyword id="KW-0665">Pyrimidine biosynthesis</keyword>
<gene>
    <name evidence="1" type="primary">pyrD</name>
    <name type="ordered locus">BMA10247_0768</name>
</gene>
<sequence>MFSSLYPLARASLFKMDAEDAHHLTLRMLGAAGRTGLACALSPRVPDAPRTVMGLSFRNPVGLAAGLDKDGAAIDGFAALGFGFIEVGTVTPRAQPGNPRPRMFRLPEADAIINRMGFNNSGVDQFVKNVQAARYRGVLGLNIGKNADTPIERAADDYLYCLERVYPFASYVTINISSPNTKNLRQLQGAGELDALLAALKDKQRRLADLHGKLVPLALKIAPDLDDEQVKEIAATLLRHDIEGVIATNTTLSREAVKGLPHADEAGGLSGRPVFDASNAVIRKLRAELGDAVPIIGVGGIFSGEDARAKLAAGAALVQLYTGFIYRGPALVAECVKAIARGEAR</sequence>
<proteinExistence type="inferred from homology"/>